<feature type="signal peptide" evidence="2">
    <location>
        <begin position="1"/>
        <end position="19"/>
    </location>
</feature>
<feature type="chain" id="PRO_0000265772" description="Prokineticin Bv8-like peptide 2">
    <location>
        <begin position="20"/>
        <end position="96"/>
    </location>
</feature>
<feature type="disulfide bond" evidence="1">
    <location>
        <begin position="26"/>
        <end position="38"/>
    </location>
</feature>
<feature type="disulfide bond" evidence="1">
    <location>
        <begin position="32"/>
        <end position="50"/>
    </location>
</feature>
<feature type="disulfide bond" evidence="1">
    <location>
        <begin position="37"/>
        <end position="78"/>
    </location>
</feature>
<feature type="disulfide bond" evidence="1">
    <location>
        <begin position="60"/>
        <end position="86"/>
    </location>
</feature>
<feature type="disulfide bond" evidence="1">
    <location>
        <begin position="80"/>
        <end position="95"/>
    </location>
</feature>
<sequence>MKCFAQIVVLLLVIAFSHGAVITGACDRDVQCGSGTCCAASLWSRNIRFCVPLGNNGEECHPASHKVPYNGKRLSSLCPCKSGLTCSKSGEKFQCS</sequence>
<dbReference type="EMBL" id="AF411091">
    <property type="protein sequence ID" value="AAN03822.1"/>
    <property type="molecule type" value="mRNA"/>
</dbReference>
<dbReference type="SMR" id="Q8JFQ0"/>
<dbReference type="GO" id="GO:0005576">
    <property type="term" value="C:extracellular region"/>
    <property type="evidence" value="ECO:0007669"/>
    <property type="project" value="UniProtKB-SubCell"/>
</dbReference>
<dbReference type="GO" id="GO:0090729">
    <property type="term" value="F:toxin activity"/>
    <property type="evidence" value="ECO:0007669"/>
    <property type="project" value="UniProtKB-KW"/>
</dbReference>
<dbReference type="GO" id="GO:0001935">
    <property type="term" value="P:endothelial cell proliferation"/>
    <property type="evidence" value="ECO:0007669"/>
    <property type="project" value="TreeGrafter"/>
</dbReference>
<dbReference type="Gene3D" id="2.10.80.10">
    <property type="entry name" value="Lipase, subunit A"/>
    <property type="match status" value="1"/>
</dbReference>
<dbReference type="InterPro" id="IPR009523">
    <property type="entry name" value="Prokineticin"/>
</dbReference>
<dbReference type="InterPro" id="IPR023569">
    <property type="entry name" value="Prokineticin_domain"/>
</dbReference>
<dbReference type="PANTHER" id="PTHR18821">
    <property type="entry name" value="PROKINETICIN"/>
    <property type="match status" value="1"/>
</dbReference>
<dbReference type="PANTHER" id="PTHR18821:SF7">
    <property type="entry name" value="PROKINETICIN-1"/>
    <property type="match status" value="1"/>
</dbReference>
<dbReference type="Pfam" id="PF06607">
    <property type="entry name" value="Prokineticin"/>
    <property type="match status" value="1"/>
</dbReference>
<dbReference type="SUPFAM" id="SSF57190">
    <property type="entry name" value="Colipase-like"/>
    <property type="match status" value="2"/>
</dbReference>
<protein>
    <recommendedName>
        <fullName>Prokineticin Bv8-like peptide 2</fullName>
        <shortName>Bv8-LP2</shortName>
    </recommendedName>
</protein>
<accession>Q8JFQ0</accession>
<proteinExistence type="evidence at protein level"/>
<keyword id="KW-0903">Direct protein sequencing</keyword>
<keyword id="KW-1015">Disulfide bond</keyword>
<keyword id="KW-1213">G-protein coupled receptor impairing toxin</keyword>
<keyword id="KW-0964">Secreted</keyword>
<keyword id="KW-0732">Signal</keyword>
<keyword id="KW-0800">Toxin</keyword>
<name>BM8X_BOMMX</name>
<organism>
    <name type="scientific">Bombina maxima</name>
    <name type="common">Giant fire-bellied toad</name>
    <name type="synonym">Chinese red belly toad</name>
    <dbReference type="NCBI Taxonomy" id="161274"/>
    <lineage>
        <taxon>Eukaryota</taxon>
        <taxon>Metazoa</taxon>
        <taxon>Chordata</taxon>
        <taxon>Craniata</taxon>
        <taxon>Vertebrata</taxon>
        <taxon>Euteleostomi</taxon>
        <taxon>Amphibia</taxon>
        <taxon>Batrachia</taxon>
        <taxon>Anura</taxon>
        <taxon>Bombinatoridae</taxon>
        <taxon>Bombina</taxon>
    </lineage>
</organism>
<comment type="function">
    <text evidence="1 2">Potent agonist for both PKR1/PROKR1 and PKR2/PROKR2, and inducer of a potent and long-lasting hyperalgesia. Also potentiates capsaicin-induced TRPV1 current when tested on DRG neurons. At subnanomolar concentrations, this protein both induces potent chemotaxis of macrophages and stimulates LPS-induced production of the pro-inflammatory cytokines IL-1 and IL-12. In vivo, potently stimulates the contraction of the guinea-pig gastrointestinal (GI) smooth muscle (nanomolar concentration) and rabbit aortic rings (PubMed:12628381).</text>
</comment>
<comment type="subcellular location">
    <subcellularLocation>
        <location>Secreted</location>
    </subcellularLocation>
</comment>
<comment type="tissue specificity">
    <text>Expressed by the skin glands.</text>
</comment>
<comment type="similarity">
    <text evidence="3">Belongs to the AVIT (prokineticin) family.</text>
</comment>
<reference key="1">
    <citation type="journal article" date="2003" name="Comp. Biochem. Physiol.">
        <title>Two novel Bv8-like peptides from skin secretions of the toad Bombina maxima.</title>
        <authorList>
            <person name="Lai R."/>
            <person name="Liu H."/>
            <person name="Lee W.H."/>
            <person name="Zhang Y."/>
        </authorList>
    </citation>
    <scope>NUCLEOTIDE SEQUENCE [MRNA]</scope>
    <scope>PROTEIN SEQUENCE OF 20-45</scope>
    <scope>FUNCTION</scope>
    <source>
        <tissue>Skin secretion</tissue>
    </source>
</reference>
<evidence type="ECO:0000250" key="1">
    <source>
        <dbReference type="UniProtKB" id="Q9PW66"/>
    </source>
</evidence>
<evidence type="ECO:0000269" key="2">
    <source>
    </source>
</evidence>
<evidence type="ECO:0000305" key="3"/>